<sequence length="327" mass="35087">MTKRIAITPGEPASIGPDLVIKLAQQAWPVELVVCADPNLLMTRAKMLGLPLQLRPYQPSQPPKPQTAGTLTIAPFTLAEEVECGVLNEANSAYVVETLRYAGEKNMSNEFDAVVTGPVHKGIINQAGIPFSGHTEFFALQANCADVVMMLAAPGLQVALMTTHIPLAYVAKAITRDRLHHIITILHRELVSKFGLGSPKIYVCGLNPHAGEDGHLGREEIDTIIPALNELREQGMDIVGPLPADTLFQPKYLEQADVVLAMYHDQGLPVLKSLGFGKSVNITLGLPYIRTSVDHGTALELAGSGKADCGSFTCALNKAIELASKSK</sequence>
<protein>
    <recommendedName>
        <fullName evidence="1">4-hydroxythreonine-4-phosphate dehydrogenase</fullName>
        <ecNumber evidence="1">1.1.1.262</ecNumber>
    </recommendedName>
    <alternativeName>
        <fullName evidence="1">4-(phosphohydroxy)-L-threonine dehydrogenase</fullName>
    </alternativeName>
</protein>
<feature type="chain" id="PRO_1000128261" description="4-hydroxythreonine-4-phosphate dehydrogenase">
    <location>
        <begin position="1"/>
        <end position="327"/>
    </location>
</feature>
<feature type="binding site" evidence="1">
    <location>
        <position position="134"/>
    </location>
    <ligand>
        <name>substrate</name>
    </ligand>
</feature>
<feature type="binding site" evidence="1">
    <location>
        <position position="135"/>
    </location>
    <ligand>
        <name>substrate</name>
    </ligand>
</feature>
<feature type="binding site" evidence="1">
    <location>
        <position position="164"/>
    </location>
    <ligand>
        <name>a divalent metal cation</name>
        <dbReference type="ChEBI" id="CHEBI:60240"/>
        <note>ligand shared between dimeric partners</note>
    </ligand>
</feature>
<feature type="binding site" evidence="1">
    <location>
        <position position="209"/>
    </location>
    <ligand>
        <name>a divalent metal cation</name>
        <dbReference type="ChEBI" id="CHEBI:60240"/>
        <note>ligand shared between dimeric partners</note>
    </ligand>
</feature>
<feature type="binding site" evidence="1">
    <location>
        <position position="264"/>
    </location>
    <ligand>
        <name>a divalent metal cation</name>
        <dbReference type="ChEBI" id="CHEBI:60240"/>
        <note>ligand shared between dimeric partners</note>
    </ligand>
</feature>
<feature type="binding site" evidence="1">
    <location>
        <position position="272"/>
    </location>
    <ligand>
        <name>substrate</name>
    </ligand>
</feature>
<feature type="binding site" evidence="1">
    <location>
        <position position="281"/>
    </location>
    <ligand>
        <name>substrate</name>
    </ligand>
</feature>
<feature type="binding site" evidence="1">
    <location>
        <position position="290"/>
    </location>
    <ligand>
        <name>substrate</name>
    </ligand>
</feature>
<reference key="1">
    <citation type="submission" date="2006-08" db="EMBL/GenBank/DDBJ databases">
        <title>Complete sequence of Shewanella frigidimarina NCIMB 400.</title>
        <authorList>
            <consortium name="US DOE Joint Genome Institute"/>
            <person name="Copeland A."/>
            <person name="Lucas S."/>
            <person name="Lapidus A."/>
            <person name="Barry K."/>
            <person name="Detter J.C."/>
            <person name="Glavina del Rio T."/>
            <person name="Hammon N."/>
            <person name="Israni S."/>
            <person name="Dalin E."/>
            <person name="Tice H."/>
            <person name="Pitluck S."/>
            <person name="Fredrickson J.K."/>
            <person name="Kolker E."/>
            <person name="McCuel L.A."/>
            <person name="DiChristina T."/>
            <person name="Nealson K.H."/>
            <person name="Newman D."/>
            <person name="Tiedje J.M."/>
            <person name="Zhou J."/>
            <person name="Romine M.F."/>
            <person name="Culley D.E."/>
            <person name="Serres M."/>
            <person name="Chertkov O."/>
            <person name="Brettin T."/>
            <person name="Bruce D."/>
            <person name="Han C."/>
            <person name="Tapia R."/>
            <person name="Gilna P."/>
            <person name="Schmutz J."/>
            <person name="Larimer F."/>
            <person name="Land M."/>
            <person name="Hauser L."/>
            <person name="Kyrpides N."/>
            <person name="Mikhailova N."/>
            <person name="Richardson P."/>
        </authorList>
    </citation>
    <scope>NUCLEOTIDE SEQUENCE [LARGE SCALE GENOMIC DNA]</scope>
    <source>
        <strain>NCIMB 400</strain>
    </source>
</reference>
<accession>Q07YJ9</accession>
<name>PDXA_SHEFN</name>
<proteinExistence type="inferred from homology"/>
<evidence type="ECO:0000255" key="1">
    <source>
        <dbReference type="HAMAP-Rule" id="MF_00536"/>
    </source>
</evidence>
<dbReference type="EC" id="1.1.1.262" evidence="1"/>
<dbReference type="EMBL" id="CP000447">
    <property type="protein sequence ID" value="ABI72915.1"/>
    <property type="molecule type" value="Genomic_DNA"/>
</dbReference>
<dbReference type="RefSeq" id="WP_011638521.1">
    <property type="nucleotide sequence ID" value="NC_008345.1"/>
</dbReference>
<dbReference type="SMR" id="Q07YJ9"/>
<dbReference type="STRING" id="318167.Sfri_3078"/>
<dbReference type="KEGG" id="sfr:Sfri_3078"/>
<dbReference type="eggNOG" id="COG1995">
    <property type="taxonomic scope" value="Bacteria"/>
</dbReference>
<dbReference type="HOGENOM" id="CLU_040168_2_0_6"/>
<dbReference type="OrthoDB" id="9801783at2"/>
<dbReference type="UniPathway" id="UPA00244">
    <property type="reaction ID" value="UER00312"/>
</dbReference>
<dbReference type="Proteomes" id="UP000000684">
    <property type="component" value="Chromosome"/>
</dbReference>
<dbReference type="GO" id="GO:0005737">
    <property type="term" value="C:cytoplasm"/>
    <property type="evidence" value="ECO:0007669"/>
    <property type="project" value="UniProtKB-SubCell"/>
</dbReference>
<dbReference type="GO" id="GO:0050570">
    <property type="term" value="F:4-hydroxythreonine-4-phosphate dehydrogenase activity"/>
    <property type="evidence" value="ECO:0007669"/>
    <property type="project" value="UniProtKB-UniRule"/>
</dbReference>
<dbReference type="GO" id="GO:0050897">
    <property type="term" value="F:cobalt ion binding"/>
    <property type="evidence" value="ECO:0007669"/>
    <property type="project" value="UniProtKB-UniRule"/>
</dbReference>
<dbReference type="GO" id="GO:0000287">
    <property type="term" value="F:magnesium ion binding"/>
    <property type="evidence" value="ECO:0007669"/>
    <property type="project" value="UniProtKB-UniRule"/>
</dbReference>
<dbReference type="GO" id="GO:0051287">
    <property type="term" value="F:NAD binding"/>
    <property type="evidence" value="ECO:0007669"/>
    <property type="project" value="InterPro"/>
</dbReference>
<dbReference type="GO" id="GO:0008270">
    <property type="term" value="F:zinc ion binding"/>
    <property type="evidence" value="ECO:0007669"/>
    <property type="project" value="UniProtKB-UniRule"/>
</dbReference>
<dbReference type="GO" id="GO:0042823">
    <property type="term" value="P:pyridoxal phosphate biosynthetic process"/>
    <property type="evidence" value="ECO:0007669"/>
    <property type="project" value="UniProtKB-UniRule"/>
</dbReference>
<dbReference type="GO" id="GO:0008615">
    <property type="term" value="P:pyridoxine biosynthetic process"/>
    <property type="evidence" value="ECO:0007669"/>
    <property type="project" value="UniProtKB-UniRule"/>
</dbReference>
<dbReference type="Gene3D" id="3.40.718.10">
    <property type="entry name" value="Isopropylmalate Dehydrogenase"/>
    <property type="match status" value="1"/>
</dbReference>
<dbReference type="HAMAP" id="MF_00536">
    <property type="entry name" value="PdxA"/>
    <property type="match status" value="1"/>
</dbReference>
<dbReference type="InterPro" id="IPR037510">
    <property type="entry name" value="PdxA"/>
</dbReference>
<dbReference type="InterPro" id="IPR005255">
    <property type="entry name" value="PdxA_fam"/>
</dbReference>
<dbReference type="NCBIfam" id="TIGR00557">
    <property type="entry name" value="pdxA"/>
    <property type="match status" value="1"/>
</dbReference>
<dbReference type="PANTHER" id="PTHR30004">
    <property type="entry name" value="4-HYDROXYTHREONINE-4-PHOSPHATE DEHYDROGENASE"/>
    <property type="match status" value="1"/>
</dbReference>
<dbReference type="PANTHER" id="PTHR30004:SF5">
    <property type="entry name" value="4-HYDROXYTHREONINE-4-PHOSPHATE DEHYDROGENASE"/>
    <property type="match status" value="1"/>
</dbReference>
<dbReference type="Pfam" id="PF04166">
    <property type="entry name" value="PdxA"/>
    <property type="match status" value="1"/>
</dbReference>
<dbReference type="SUPFAM" id="SSF53659">
    <property type="entry name" value="Isocitrate/Isopropylmalate dehydrogenase-like"/>
    <property type="match status" value="1"/>
</dbReference>
<organism>
    <name type="scientific">Shewanella frigidimarina (strain NCIMB 400)</name>
    <dbReference type="NCBI Taxonomy" id="318167"/>
    <lineage>
        <taxon>Bacteria</taxon>
        <taxon>Pseudomonadati</taxon>
        <taxon>Pseudomonadota</taxon>
        <taxon>Gammaproteobacteria</taxon>
        <taxon>Alteromonadales</taxon>
        <taxon>Shewanellaceae</taxon>
        <taxon>Shewanella</taxon>
    </lineage>
</organism>
<keyword id="KW-0170">Cobalt</keyword>
<keyword id="KW-0963">Cytoplasm</keyword>
<keyword id="KW-0460">Magnesium</keyword>
<keyword id="KW-0479">Metal-binding</keyword>
<keyword id="KW-0520">NAD</keyword>
<keyword id="KW-0521">NADP</keyword>
<keyword id="KW-0560">Oxidoreductase</keyword>
<keyword id="KW-0664">Pyridoxine biosynthesis</keyword>
<keyword id="KW-1185">Reference proteome</keyword>
<keyword id="KW-0862">Zinc</keyword>
<comment type="function">
    <text evidence="1">Catalyzes the NAD(P)-dependent oxidation of 4-(phosphooxy)-L-threonine (HTP) into 2-amino-3-oxo-4-(phosphooxy)butyric acid which spontaneously decarboxylates to form 3-amino-2-oxopropyl phosphate (AHAP).</text>
</comment>
<comment type="catalytic activity">
    <reaction evidence="1">
        <text>4-(phosphooxy)-L-threonine + NAD(+) = 3-amino-2-oxopropyl phosphate + CO2 + NADH</text>
        <dbReference type="Rhea" id="RHEA:32275"/>
        <dbReference type="ChEBI" id="CHEBI:16526"/>
        <dbReference type="ChEBI" id="CHEBI:57279"/>
        <dbReference type="ChEBI" id="CHEBI:57540"/>
        <dbReference type="ChEBI" id="CHEBI:57945"/>
        <dbReference type="ChEBI" id="CHEBI:58452"/>
        <dbReference type="EC" id="1.1.1.262"/>
    </reaction>
</comment>
<comment type="cofactor">
    <cofactor evidence="1">
        <name>Zn(2+)</name>
        <dbReference type="ChEBI" id="CHEBI:29105"/>
    </cofactor>
    <cofactor evidence="1">
        <name>Mg(2+)</name>
        <dbReference type="ChEBI" id="CHEBI:18420"/>
    </cofactor>
    <cofactor evidence="1">
        <name>Co(2+)</name>
        <dbReference type="ChEBI" id="CHEBI:48828"/>
    </cofactor>
    <text evidence="1">Binds 1 divalent metal cation per subunit. Can use ions such as Zn(2+), Mg(2+) or Co(2+).</text>
</comment>
<comment type="pathway">
    <text evidence="1">Cofactor biosynthesis; pyridoxine 5'-phosphate biosynthesis; pyridoxine 5'-phosphate from D-erythrose 4-phosphate: step 4/5.</text>
</comment>
<comment type="subunit">
    <text evidence="1">Homodimer.</text>
</comment>
<comment type="subcellular location">
    <subcellularLocation>
        <location evidence="1">Cytoplasm</location>
    </subcellularLocation>
</comment>
<comment type="miscellaneous">
    <text evidence="1">The active site is located at the dimer interface.</text>
</comment>
<comment type="similarity">
    <text evidence="1">Belongs to the PdxA family.</text>
</comment>
<gene>
    <name evidence="1" type="primary">pdxA</name>
    <name type="ordered locus">Sfri_3078</name>
</gene>